<organism>
    <name type="scientific">Salmonella typhimurium (strain LT2 / SGSC1412 / ATCC 700720)</name>
    <dbReference type="NCBI Taxonomy" id="99287"/>
    <lineage>
        <taxon>Bacteria</taxon>
        <taxon>Pseudomonadati</taxon>
        <taxon>Pseudomonadota</taxon>
        <taxon>Gammaproteobacteria</taxon>
        <taxon>Enterobacterales</taxon>
        <taxon>Enterobacteriaceae</taxon>
        <taxon>Salmonella</taxon>
    </lineage>
</organism>
<sequence length="346" mass="38804">MARHPRWTLSQVTELFEKPLLELLFEAQQIHRQHFDPQQVQVSTLLSIKTGACPEDCKYCPQSSRYKTGLEAERLMEVEQVLDSARKAKNAGSTRFCMGAAWRNPHERDMPYLEKIVQGVKAMGLETCMTLGMLNESQAQRLANAGLDYYNHNLDTSPEFYGNIITTRTYQERLDTLEKVREAGIKVCSGGIVGLGETVTDRAGLLLQLANLPTPPESVPINMLVKVKGTPLADNDDVDAFDFIRTIAVARIMMPTSYVRLSAGREQMNEQTQAMCFMAGANSIFYGCKLLTTPNPAEDKDLQLFRKLGLNPQQTRVLAGDNEQQQRLEQTLMTPDTDDYYNAAAL</sequence>
<reference key="1">
    <citation type="journal article" date="2001" name="Nature">
        <title>Complete genome sequence of Salmonella enterica serovar Typhimurium LT2.</title>
        <authorList>
            <person name="McClelland M."/>
            <person name="Sanderson K.E."/>
            <person name="Spieth J."/>
            <person name="Clifton S.W."/>
            <person name="Latreille P."/>
            <person name="Courtney L."/>
            <person name="Porwollik S."/>
            <person name="Ali J."/>
            <person name="Dante M."/>
            <person name="Du F."/>
            <person name="Hou S."/>
            <person name="Layman D."/>
            <person name="Leonard S."/>
            <person name="Nguyen C."/>
            <person name="Scott K."/>
            <person name="Holmes A."/>
            <person name="Grewal N."/>
            <person name="Mulvaney E."/>
            <person name="Ryan E."/>
            <person name="Sun H."/>
            <person name="Florea L."/>
            <person name="Miller W."/>
            <person name="Stoneking T."/>
            <person name="Nhan M."/>
            <person name="Waterston R."/>
            <person name="Wilson R.K."/>
        </authorList>
    </citation>
    <scope>NUCLEOTIDE SEQUENCE [LARGE SCALE GENOMIC DNA]</scope>
    <source>
        <strain>LT2 / SGSC1412 / ATCC 700720</strain>
    </source>
</reference>
<reference key="2">
    <citation type="journal article" date="1988" name="Gene">
        <title>Transcriptional regulation and gene arrangement of Escherichia coli, Citrobacter freundii and Salmonella typhimurium biotin operons.</title>
        <authorList>
            <person name="Shiuan D."/>
            <person name="Campbell A."/>
        </authorList>
    </citation>
    <scope>NUCLEOTIDE SEQUENCE [GENOMIC DNA] OF 1-5</scope>
</reference>
<feature type="chain" id="PRO_0000185561" description="Biotin synthase">
    <location>
        <begin position="1"/>
        <end position="346"/>
    </location>
</feature>
<feature type="domain" description="Radical SAM core" evidence="2">
    <location>
        <begin position="38"/>
        <end position="256"/>
    </location>
</feature>
<feature type="binding site" evidence="1">
    <location>
        <position position="53"/>
    </location>
    <ligand>
        <name>[4Fe-4S] cluster</name>
        <dbReference type="ChEBI" id="CHEBI:49883"/>
        <note>4Fe-4S-S-AdoMet</note>
    </ligand>
</feature>
<feature type="binding site" evidence="1">
    <location>
        <position position="57"/>
    </location>
    <ligand>
        <name>[4Fe-4S] cluster</name>
        <dbReference type="ChEBI" id="CHEBI:49883"/>
        <note>4Fe-4S-S-AdoMet</note>
    </ligand>
</feature>
<feature type="binding site" evidence="1">
    <location>
        <position position="60"/>
    </location>
    <ligand>
        <name>[4Fe-4S] cluster</name>
        <dbReference type="ChEBI" id="CHEBI:49883"/>
        <note>4Fe-4S-S-AdoMet</note>
    </ligand>
</feature>
<feature type="binding site" evidence="1">
    <location>
        <position position="97"/>
    </location>
    <ligand>
        <name>[2Fe-2S] cluster</name>
        <dbReference type="ChEBI" id="CHEBI:190135"/>
    </ligand>
</feature>
<feature type="binding site" evidence="1">
    <location>
        <position position="128"/>
    </location>
    <ligand>
        <name>[2Fe-2S] cluster</name>
        <dbReference type="ChEBI" id="CHEBI:190135"/>
    </ligand>
</feature>
<feature type="binding site" evidence="1">
    <location>
        <position position="188"/>
    </location>
    <ligand>
        <name>[2Fe-2S] cluster</name>
        <dbReference type="ChEBI" id="CHEBI:190135"/>
    </ligand>
</feature>
<feature type="binding site" evidence="1">
    <location>
        <position position="260"/>
    </location>
    <ligand>
        <name>[2Fe-2S] cluster</name>
        <dbReference type="ChEBI" id="CHEBI:190135"/>
    </ligand>
</feature>
<protein>
    <recommendedName>
        <fullName evidence="1">Biotin synthase</fullName>
        <ecNumber evidence="1">2.8.1.6</ecNumber>
    </recommendedName>
</protein>
<keyword id="KW-0001">2Fe-2S</keyword>
<keyword id="KW-0004">4Fe-4S</keyword>
<keyword id="KW-0093">Biotin biosynthesis</keyword>
<keyword id="KW-0408">Iron</keyword>
<keyword id="KW-0411">Iron-sulfur</keyword>
<keyword id="KW-0479">Metal-binding</keyword>
<keyword id="KW-1185">Reference proteome</keyword>
<keyword id="KW-0949">S-adenosyl-L-methionine</keyword>
<keyword id="KW-0808">Transferase</keyword>
<gene>
    <name evidence="1" type="primary">bioB</name>
    <name type="ordered locus">STM0794</name>
</gene>
<accession>P12678</accession>
<comment type="function">
    <text evidence="1">Catalyzes the conversion of dethiobiotin (DTB) to biotin by the insertion of a sulfur atom into dethiobiotin via a radical-based mechanism.</text>
</comment>
<comment type="catalytic activity">
    <reaction evidence="1">
        <text>(4R,5S)-dethiobiotin + (sulfur carrier)-SH + 2 reduced [2Fe-2S]-[ferredoxin] + 2 S-adenosyl-L-methionine = (sulfur carrier)-H + biotin + 2 5'-deoxyadenosine + 2 L-methionine + 2 oxidized [2Fe-2S]-[ferredoxin]</text>
        <dbReference type="Rhea" id="RHEA:22060"/>
        <dbReference type="Rhea" id="RHEA-COMP:10000"/>
        <dbReference type="Rhea" id="RHEA-COMP:10001"/>
        <dbReference type="Rhea" id="RHEA-COMP:14737"/>
        <dbReference type="Rhea" id="RHEA-COMP:14739"/>
        <dbReference type="ChEBI" id="CHEBI:17319"/>
        <dbReference type="ChEBI" id="CHEBI:29917"/>
        <dbReference type="ChEBI" id="CHEBI:33737"/>
        <dbReference type="ChEBI" id="CHEBI:33738"/>
        <dbReference type="ChEBI" id="CHEBI:57586"/>
        <dbReference type="ChEBI" id="CHEBI:57844"/>
        <dbReference type="ChEBI" id="CHEBI:59789"/>
        <dbReference type="ChEBI" id="CHEBI:64428"/>
        <dbReference type="ChEBI" id="CHEBI:149473"/>
        <dbReference type="EC" id="2.8.1.6"/>
    </reaction>
</comment>
<comment type="cofactor">
    <cofactor evidence="1">
        <name>[4Fe-4S] cluster</name>
        <dbReference type="ChEBI" id="CHEBI:49883"/>
    </cofactor>
    <text evidence="1">Binds 1 [4Fe-4S] cluster. The cluster is coordinated with 3 cysteines and an exchangeable S-adenosyl-L-methionine.</text>
</comment>
<comment type="cofactor">
    <cofactor evidence="1">
        <name>[2Fe-2S] cluster</name>
        <dbReference type="ChEBI" id="CHEBI:190135"/>
    </cofactor>
    <text evidence="1">Binds 1 [2Fe-2S] cluster. The cluster is coordinated with 3 cysteines and 1 arginine.</text>
</comment>
<comment type="pathway">
    <text evidence="1">Cofactor biosynthesis; biotin biosynthesis; biotin from 7,8-diaminononanoate: step 2/2.</text>
</comment>
<comment type="subunit">
    <text evidence="1">Homodimer.</text>
</comment>
<comment type="similarity">
    <text evidence="1">Belongs to the radical SAM superfamily. Biotin synthase family.</text>
</comment>
<proteinExistence type="inferred from homology"/>
<name>BIOB_SALTY</name>
<dbReference type="EC" id="2.8.1.6" evidence="1"/>
<dbReference type="EMBL" id="AE006468">
    <property type="protein sequence ID" value="AAL19731.1"/>
    <property type="molecule type" value="Genomic_DNA"/>
</dbReference>
<dbReference type="EMBL" id="M21923">
    <property type="status" value="NOT_ANNOTATED_CDS"/>
    <property type="molecule type" value="Genomic_DNA"/>
</dbReference>
<dbReference type="RefSeq" id="NP_459772.1">
    <property type="nucleotide sequence ID" value="NC_003197.2"/>
</dbReference>
<dbReference type="RefSeq" id="WP_000090729.1">
    <property type="nucleotide sequence ID" value="NC_003197.2"/>
</dbReference>
<dbReference type="SMR" id="P12678"/>
<dbReference type="STRING" id="99287.STM0794"/>
<dbReference type="PaxDb" id="99287-STM0794"/>
<dbReference type="GeneID" id="1252314"/>
<dbReference type="KEGG" id="stm:STM0794"/>
<dbReference type="PATRIC" id="fig|99287.12.peg.828"/>
<dbReference type="HOGENOM" id="CLU_033172_1_2_6"/>
<dbReference type="OMA" id="NICTTHT"/>
<dbReference type="PhylomeDB" id="P12678"/>
<dbReference type="BioCyc" id="SENT99287:STM0794-MONOMER"/>
<dbReference type="UniPathway" id="UPA00078">
    <property type="reaction ID" value="UER00162"/>
</dbReference>
<dbReference type="Proteomes" id="UP000001014">
    <property type="component" value="Chromosome"/>
</dbReference>
<dbReference type="GO" id="GO:0051537">
    <property type="term" value="F:2 iron, 2 sulfur cluster binding"/>
    <property type="evidence" value="ECO:0000318"/>
    <property type="project" value="GO_Central"/>
</dbReference>
<dbReference type="GO" id="GO:0051539">
    <property type="term" value="F:4 iron, 4 sulfur cluster binding"/>
    <property type="evidence" value="ECO:0007669"/>
    <property type="project" value="UniProtKB-KW"/>
</dbReference>
<dbReference type="GO" id="GO:0004076">
    <property type="term" value="F:biotin synthase activity"/>
    <property type="evidence" value="ECO:0000318"/>
    <property type="project" value="GO_Central"/>
</dbReference>
<dbReference type="GO" id="GO:0005506">
    <property type="term" value="F:iron ion binding"/>
    <property type="evidence" value="ECO:0007669"/>
    <property type="project" value="UniProtKB-UniRule"/>
</dbReference>
<dbReference type="GO" id="GO:0009102">
    <property type="term" value="P:biotin biosynthetic process"/>
    <property type="evidence" value="ECO:0000318"/>
    <property type="project" value="GO_Central"/>
</dbReference>
<dbReference type="CDD" id="cd01335">
    <property type="entry name" value="Radical_SAM"/>
    <property type="match status" value="1"/>
</dbReference>
<dbReference type="FunFam" id="3.20.20.70:FF:000011">
    <property type="entry name" value="Biotin synthase"/>
    <property type="match status" value="1"/>
</dbReference>
<dbReference type="Gene3D" id="3.20.20.70">
    <property type="entry name" value="Aldolase class I"/>
    <property type="match status" value="1"/>
</dbReference>
<dbReference type="HAMAP" id="MF_01694">
    <property type="entry name" value="BioB"/>
    <property type="match status" value="1"/>
</dbReference>
<dbReference type="InterPro" id="IPR013785">
    <property type="entry name" value="Aldolase_TIM"/>
</dbReference>
<dbReference type="InterPro" id="IPR010722">
    <property type="entry name" value="BATS_dom"/>
</dbReference>
<dbReference type="InterPro" id="IPR002684">
    <property type="entry name" value="Biotin_synth/BioAB"/>
</dbReference>
<dbReference type="InterPro" id="IPR024177">
    <property type="entry name" value="Biotin_synthase"/>
</dbReference>
<dbReference type="InterPro" id="IPR006638">
    <property type="entry name" value="Elp3/MiaA/NifB-like_rSAM"/>
</dbReference>
<dbReference type="InterPro" id="IPR007197">
    <property type="entry name" value="rSAM"/>
</dbReference>
<dbReference type="NCBIfam" id="TIGR00433">
    <property type="entry name" value="bioB"/>
    <property type="match status" value="1"/>
</dbReference>
<dbReference type="PANTHER" id="PTHR22976">
    <property type="entry name" value="BIOTIN SYNTHASE"/>
    <property type="match status" value="1"/>
</dbReference>
<dbReference type="PANTHER" id="PTHR22976:SF2">
    <property type="entry name" value="BIOTIN SYNTHASE, MITOCHONDRIAL"/>
    <property type="match status" value="1"/>
</dbReference>
<dbReference type="Pfam" id="PF06968">
    <property type="entry name" value="BATS"/>
    <property type="match status" value="1"/>
</dbReference>
<dbReference type="Pfam" id="PF04055">
    <property type="entry name" value="Radical_SAM"/>
    <property type="match status" value="1"/>
</dbReference>
<dbReference type="PIRSF" id="PIRSF001619">
    <property type="entry name" value="Biotin_synth"/>
    <property type="match status" value="1"/>
</dbReference>
<dbReference type="SFLD" id="SFLDF00272">
    <property type="entry name" value="biotin_synthase"/>
    <property type="match status" value="1"/>
</dbReference>
<dbReference type="SFLD" id="SFLDS00029">
    <property type="entry name" value="Radical_SAM"/>
    <property type="match status" value="1"/>
</dbReference>
<dbReference type="SMART" id="SM00876">
    <property type="entry name" value="BATS"/>
    <property type="match status" value="1"/>
</dbReference>
<dbReference type="SMART" id="SM00729">
    <property type="entry name" value="Elp3"/>
    <property type="match status" value="1"/>
</dbReference>
<dbReference type="SUPFAM" id="SSF102114">
    <property type="entry name" value="Radical SAM enzymes"/>
    <property type="match status" value="1"/>
</dbReference>
<dbReference type="PROSITE" id="PS51918">
    <property type="entry name" value="RADICAL_SAM"/>
    <property type="match status" value="1"/>
</dbReference>
<evidence type="ECO:0000255" key="1">
    <source>
        <dbReference type="HAMAP-Rule" id="MF_01694"/>
    </source>
</evidence>
<evidence type="ECO:0000255" key="2">
    <source>
        <dbReference type="PROSITE-ProRule" id="PRU01266"/>
    </source>
</evidence>